<keyword id="KW-0068">Autocatalytic cleavage</keyword>
<keyword id="KW-0227">DNA damage</keyword>
<keyword id="KW-0234">DNA repair</keyword>
<keyword id="KW-0235">DNA replication</keyword>
<keyword id="KW-0238">DNA-binding</keyword>
<keyword id="KW-0378">Hydrolase</keyword>
<keyword id="KW-1185">Reference proteome</keyword>
<keyword id="KW-0678">Repressor</keyword>
<keyword id="KW-0742">SOS response</keyword>
<keyword id="KW-0804">Transcription</keyword>
<keyword id="KW-0805">Transcription regulation</keyword>
<dbReference type="EC" id="3.4.21.88" evidence="1"/>
<dbReference type="EMBL" id="CP001191">
    <property type="protein sequence ID" value="ACI54888.1"/>
    <property type="molecule type" value="Genomic_DNA"/>
</dbReference>
<dbReference type="RefSeq" id="WP_003579060.1">
    <property type="nucleotide sequence ID" value="NC_011369.1"/>
</dbReference>
<dbReference type="SMR" id="B5ZN98"/>
<dbReference type="STRING" id="395492.Rleg2_1598"/>
<dbReference type="MEROPS" id="S24.001"/>
<dbReference type="KEGG" id="rlt:Rleg2_1598"/>
<dbReference type="eggNOG" id="COG1974">
    <property type="taxonomic scope" value="Bacteria"/>
</dbReference>
<dbReference type="HOGENOM" id="CLU_066192_45_2_5"/>
<dbReference type="Proteomes" id="UP000008330">
    <property type="component" value="Chromosome"/>
</dbReference>
<dbReference type="GO" id="GO:0003677">
    <property type="term" value="F:DNA binding"/>
    <property type="evidence" value="ECO:0007669"/>
    <property type="project" value="UniProtKB-UniRule"/>
</dbReference>
<dbReference type="GO" id="GO:0004252">
    <property type="term" value="F:serine-type endopeptidase activity"/>
    <property type="evidence" value="ECO:0007669"/>
    <property type="project" value="UniProtKB-UniRule"/>
</dbReference>
<dbReference type="GO" id="GO:0006281">
    <property type="term" value="P:DNA repair"/>
    <property type="evidence" value="ECO:0007669"/>
    <property type="project" value="UniProtKB-UniRule"/>
</dbReference>
<dbReference type="GO" id="GO:0006260">
    <property type="term" value="P:DNA replication"/>
    <property type="evidence" value="ECO:0007669"/>
    <property type="project" value="UniProtKB-UniRule"/>
</dbReference>
<dbReference type="GO" id="GO:0045892">
    <property type="term" value="P:negative regulation of DNA-templated transcription"/>
    <property type="evidence" value="ECO:0007669"/>
    <property type="project" value="UniProtKB-UniRule"/>
</dbReference>
<dbReference type="GO" id="GO:0006508">
    <property type="term" value="P:proteolysis"/>
    <property type="evidence" value="ECO:0007669"/>
    <property type="project" value="InterPro"/>
</dbReference>
<dbReference type="GO" id="GO:0009432">
    <property type="term" value="P:SOS response"/>
    <property type="evidence" value="ECO:0007669"/>
    <property type="project" value="UniProtKB-UniRule"/>
</dbReference>
<dbReference type="CDD" id="cd06529">
    <property type="entry name" value="S24_LexA-like"/>
    <property type="match status" value="1"/>
</dbReference>
<dbReference type="FunFam" id="1.10.10.10:FF:000102">
    <property type="entry name" value="LexA repressor"/>
    <property type="match status" value="1"/>
</dbReference>
<dbReference type="FunFam" id="2.10.109.10:FF:000001">
    <property type="entry name" value="LexA repressor"/>
    <property type="match status" value="1"/>
</dbReference>
<dbReference type="Gene3D" id="2.10.109.10">
    <property type="entry name" value="Umud Fragment, subunit A"/>
    <property type="match status" value="1"/>
</dbReference>
<dbReference type="Gene3D" id="1.10.10.10">
    <property type="entry name" value="Winged helix-like DNA-binding domain superfamily/Winged helix DNA-binding domain"/>
    <property type="match status" value="1"/>
</dbReference>
<dbReference type="HAMAP" id="MF_00015">
    <property type="entry name" value="LexA"/>
    <property type="match status" value="1"/>
</dbReference>
<dbReference type="InterPro" id="IPR006200">
    <property type="entry name" value="LexA"/>
</dbReference>
<dbReference type="InterPro" id="IPR039418">
    <property type="entry name" value="LexA-like"/>
</dbReference>
<dbReference type="InterPro" id="IPR036286">
    <property type="entry name" value="LexA/Signal_pep-like_sf"/>
</dbReference>
<dbReference type="InterPro" id="IPR006199">
    <property type="entry name" value="LexA_DNA-bd_dom"/>
</dbReference>
<dbReference type="InterPro" id="IPR050077">
    <property type="entry name" value="LexA_repressor"/>
</dbReference>
<dbReference type="InterPro" id="IPR006197">
    <property type="entry name" value="Peptidase_S24_LexA"/>
</dbReference>
<dbReference type="InterPro" id="IPR015927">
    <property type="entry name" value="Peptidase_S24_S26A/B/C"/>
</dbReference>
<dbReference type="InterPro" id="IPR036388">
    <property type="entry name" value="WH-like_DNA-bd_sf"/>
</dbReference>
<dbReference type="InterPro" id="IPR036390">
    <property type="entry name" value="WH_DNA-bd_sf"/>
</dbReference>
<dbReference type="NCBIfam" id="TIGR00498">
    <property type="entry name" value="lexA"/>
    <property type="match status" value="1"/>
</dbReference>
<dbReference type="PANTHER" id="PTHR33516">
    <property type="entry name" value="LEXA REPRESSOR"/>
    <property type="match status" value="1"/>
</dbReference>
<dbReference type="PANTHER" id="PTHR33516:SF2">
    <property type="entry name" value="LEXA REPRESSOR-RELATED"/>
    <property type="match status" value="1"/>
</dbReference>
<dbReference type="Pfam" id="PF01726">
    <property type="entry name" value="LexA_DNA_bind"/>
    <property type="match status" value="1"/>
</dbReference>
<dbReference type="Pfam" id="PF00717">
    <property type="entry name" value="Peptidase_S24"/>
    <property type="match status" value="1"/>
</dbReference>
<dbReference type="PRINTS" id="PR00726">
    <property type="entry name" value="LEXASERPTASE"/>
</dbReference>
<dbReference type="SUPFAM" id="SSF51306">
    <property type="entry name" value="LexA/Signal peptidase"/>
    <property type="match status" value="1"/>
</dbReference>
<dbReference type="SUPFAM" id="SSF46785">
    <property type="entry name" value="Winged helix' DNA-binding domain"/>
    <property type="match status" value="1"/>
</dbReference>
<name>LEXA_RHILW</name>
<reference key="1">
    <citation type="journal article" date="2010" name="Stand. Genomic Sci.">
        <title>Complete genome sequence of Rhizobium leguminosarum bv trifolii strain WSM2304, an effective microsymbiont of the South American clover Trifolium polymorphum.</title>
        <authorList>
            <person name="Reeve W."/>
            <person name="O'Hara G."/>
            <person name="Chain P."/>
            <person name="Ardley J."/>
            <person name="Brau L."/>
            <person name="Nandesena K."/>
            <person name="Tiwari R."/>
            <person name="Malfatti S."/>
            <person name="Kiss H."/>
            <person name="Lapidus A."/>
            <person name="Copeland A."/>
            <person name="Nolan M."/>
            <person name="Land M."/>
            <person name="Ivanova N."/>
            <person name="Mavromatis K."/>
            <person name="Markowitz V."/>
            <person name="Kyrpides N."/>
            <person name="Melino V."/>
            <person name="Denton M."/>
            <person name="Yates R."/>
            <person name="Howieson J."/>
        </authorList>
    </citation>
    <scope>NUCLEOTIDE SEQUENCE [LARGE SCALE GENOMIC DNA]</scope>
    <source>
        <strain>WSM2304</strain>
    </source>
</reference>
<protein>
    <recommendedName>
        <fullName evidence="1">LexA repressor</fullName>
        <ecNumber evidence="1">3.4.21.88</ecNumber>
    </recommendedName>
</protein>
<accession>B5ZN98</accession>
<comment type="function">
    <text evidence="1">Represses a number of genes involved in the response to DNA damage (SOS response), including recA and lexA. In the presence of single-stranded DNA, RecA interacts with LexA causing an autocatalytic cleavage which disrupts the DNA-binding part of LexA, leading to derepression of the SOS regulon and eventually DNA repair.</text>
</comment>
<comment type="catalytic activity">
    <reaction evidence="1">
        <text>Hydrolysis of Ala-|-Gly bond in repressor LexA.</text>
        <dbReference type="EC" id="3.4.21.88"/>
    </reaction>
</comment>
<comment type="subunit">
    <text evidence="1">Homodimer.</text>
</comment>
<comment type="similarity">
    <text evidence="1">Belongs to the peptidase S24 family.</text>
</comment>
<proteinExistence type="inferred from homology"/>
<gene>
    <name evidence="1" type="primary">lexA</name>
    <name type="ordered locus">Rleg2_1598</name>
</gene>
<evidence type="ECO:0000255" key="1">
    <source>
        <dbReference type="HAMAP-Rule" id="MF_00015"/>
    </source>
</evidence>
<evidence type="ECO:0000256" key="2">
    <source>
        <dbReference type="SAM" id="MobiDB-lite"/>
    </source>
</evidence>
<sequence length="239" mass="25805">MLTRKQQELLLFIHERMKESGVPPSFDEMKDALDLASKSGIHRLITALEERGFIRRLPNRARALEVIKLPEAYSPSIQPRRGFSPSVIEGSLGKPQPAAAPAPAKPVADNGNSVSVPVMGRIAAGVPISAIQNNTHDIVVPADMLGSGEHYALEVKGDSMIDAGIFDGDTVIIRNGSTASPGDIVVALVDDEEATLKRFRRKGASIALEAANPAYETRIFGPDRVKVQGKLVGLIRRYH</sequence>
<feature type="chain" id="PRO_1000089587" description="LexA repressor">
    <location>
        <begin position="1"/>
        <end position="239"/>
    </location>
</feature>
<feature type="DNA-binding region" description="H-T-H motif" evidence="1">
    <location>
        <begin position="26"/>
        <end position="46"/>
    </location>
</feature>
<feature type="region of interest" description="Disordered" evidence="2">
    <location>
        <begin position="80"/>
        <end position="108"/>
    </location>
</feature>
<feature type="active site" description="For autocatalytic cleavage activity" evidence="1">
    <location>
        <position position="159"/>
    </location>
</feature>
<feature type="active site" description="For autocatalytic cleavage activity" evidence="1">
    <location>
        <position position="197"/>
    </location>
</feature>
<feature type="site" description="Cleavage; by autolysis" evidence="1">
    <location>
        <begin position="124"/>
        <end position="125"/>
    </location>
</feature>
<organism>
    <name type="scientific">Rhizobium leguminosarum bv. trifolii (strain WSM2304)</name>
    <dbReference type="NCBI Taxonomy" id="395492"/>
    <lineage>
        <taxon>Bacteria</taxon>
        <taxon>Pseudomonadati</taxon>
        <taxon>Pseudomonadota</taxon>
        <taxon>Alphaproteobacteria</taxon>
        <taxon>Hyphomicrobiales</taxon>
        <taxon>Rhizobiaceae</taxon>
        <taxon>Rhizobium/Agrobacterium group</taxon>
        <taxon>Rhizobium</taxon>
    </lineage>
</organism>